<reference key="1">
    <citation type="submission" date="2007-09" db="EMBL/GenBank/DDBJ databases">
        <title>Complete genome sequence of Rickettsia rickettsii.</title>
        <authorList>
            <person name="Madan A."/>
            <person name="Fahey J."/>
            <person name="Helton E."/>
            <person name="Ketteman M."/>
            <person name="Madan A."/>
            <person name="Rodrigues S."/>
            <person name="Sanchez A."/>
            <person name="Dasch G."/>
            <person name="Eremeeva M."/>
        </authorList>
    </citation>
    <scope>NUCLEOTIDE SEQUENCE [LARGE SCALE GENOMIC DNA]</scope>
    <source>
        <strain>Sheila Smith</strain>
    </source>
</reference>
<organism>
    <name type="scientific">Rickettsia rickettsii (strain Sheila Smith)</name>
    <dbReference type="NCBI Taxonomy" id="392021"/>
    <lineage>
        <taxon>Bacteria</taxon>
        <taxon>Pseudomonadati</taxon>
        <taxon>Pseudomonadota</taxon>
        <taxon>Alphaproteobacteria</taxon>
        <taxon>Rickettsiales</taxon>
        <taxon>Rickettsiaceae</taxon>
        <taxon>Rickettsieae</taxon>
        <taxon>Rickettsia</taxon>
        <taxon>spotted fever group</taxon>
    </lineage>
</organism>
<name>RUVB_RICRS</name>
<comment type="function">
    <text evidence="1">The RuvA-RuvB-RuvC complex processes Holliday junction (HJ) DNA during genetic recombination and DNA repair, while the RuvA-RuvB complex plays an important role in the rescue of blocked DNA replication forks via replication fork reversal (RFR). RuvA specifically binds to HJ cruciform DNA, conferring on it an open structure. The RuvB hexamer acts as an ATP-dependent pump, pulling dsDNA into and through the RuvAB complex. RuvB forms 2 homohexamers on either side of HJ DNA bound by 1 or 2 RuvA tetramers; 4 subunits per hexamer contact DNA at a time. Coordinated motions by a converter formed by DNA-disengaged RuvB subunits stimulates ATP hydrolysis and nucleotide exchange. Immobilization of the converter enables RuvB to convert the ATP-contained energy into a lever motion, pulling 2 nucleotides of DNA out of the RuvA tetramer per ATP hydrolyzed, thus driving DNA branch migration. The RuvB motors rotate together with the DNA substrate, which together with the progressing nucleotide cycle form the mechanistic basis for DNA recombination by continuous HJ branch migration. Branch migration allows RuvC to scan DNA until it finds its consensus sequence, where it cleaves and resolves cruciform DNA.</text>
</comment>
<comment type="catalytic activity">
    <reaction evidence="1">
        <text>ATP + H2O = ADP + phosphate + H(+)</text>
        <dbReference type="Rhea" id="RHEA:13065"/>
        <dbReference type="ChEBI" id="CHEBI:15377"/>
        <dbReference type="ChEBI" id="CHEBI:15378"/>
        <dbReference type="ChEBI" id="CHEBI:30616"/>
        <dbReference type="ChEBI" id="CHEBI:43474"/>
        <dbReference type="ChEBI" id="CHEBI:456216"/>
    </reaction>
</comment>
<comment type="subunit">
    <text evidence="1">Homohexamer. Forms an RuvA(8)-RuvB(12)-Holliday junction (HJ) complex. HJ DNA is sandwiched between 2 RuvA tetramers; dsDNA enters through RuvA and exits via RuvB. An RuvB hexamer assembles on each DNA strand where it exits the tetramer. Each RuvB hexamer is contacted by two RuvA subunits (via domain III) on 2 adjacent RuvB subunits; this complex drives branch migration. In the full resolvosome a probable DNA-RuvA(4)-RuvB(12)-RuvC(2) complex forms which resolves the HJ.</text>
</comment>
<comment type="subcellular location">
    <subcellularLocation>
        <location evidence="1">Cytoplasm</location>
    </subcellularLocation>
</comment>
<comment type="domain">
    <text evidence="1">Has 3 domains, the large (RuvB-L) and small ATPase (RuvB-S) domains and the C-terminal head (RuvB-H) domain. The head domain binds DNA, while the ATPase domains jointly bind ATP, ADP or are empty depending on the state of the subunit in the translocation cycle. During a single DNA translocation step the structure of each domain remains the same, but their relative positions change.</text>
</comment>
<comment type="similarity">
    <text evidence="1">Belongs to the RuvB family.</text>
</comment>
<accession>A8GRW7</accession>
<dbReference type="EC" id="3.6.4.-" evidence="1"/>
<dbReference type="EMBL" id="CP000848">
    <property type="protein sequence ID" value="ABV76142.1"/>
    <property type="molecule type" value="Genomic_DNA"/>
</dbReference>
<dbReference type="RefSeq" id="WP_012150732.1">
    <property type="nucleotide sequence ID" value="NZ_CP121767.1"/>
</dbReference>
<dbReference type="SMR" id="A8GRW7"/>
<dbReference type="GeneID" id="79937289"/>
<dbReference type="KEGG" id="rri:A1G_03025"/>
<dbReference type="HOGENOM" id="CLU_055599_1_0_5"/>
<dbReference type="Proteomes" id="UP000006832">
    <property type="component" value="Chromosome"/>
</dbReference>
<dbReference type="GO" id="GO:0005737">
    <property type="term" value="C:cytoplasm"/>
    <property type="evidence" value="ECO:0007669"/>
    <property type="project" value="UniProtKB-SubCell"/>
</dbReference>
<dbReference type="GO" id="GO:0048476">
    <property type="term" value="C:Holliday junction resolvase complex"/>
    <property type="evidence" value="ECO:0007669"/>
    <property type="project" value="UniProtKB-UniRule"/>
</dbReference>
<dbReference type="GO" id="GO:0005524">
    <property type="term" value="F:ATP binding"/>
    <property type="evidence" value="ECO:0007669"/>
    <property type="project" value="UniProtKB-UniRule"/>
</dbReference>
<dbReference type="GO" id="GO:0016887">
    <property type="term" value="F:ATP hydrolysis activity"/>
    <property type="evidence" value="ECO:0007669"/>
    <property type="project" value="InterPro"/>
</dbReference>
<dbReference type="GO" id="GO:0000400">
    <property type="term" value="F:four-way junction DNA binding"/>
    <property type="evidence" value="ECO:0007669"/>
    <property type="project" value="UniProtKB-UniRule"/>
</dbReference>
<dbReference type="GO" id="GO:0009378">
    <property type="term" value="F:four-way junction helicase activity"/>
    <property type="evidence" value="ECO:0007669"/>
    <property type="project" value="InterPro"/>
</dbReference>
<dbReference type="GO" id="GO:0006310">
    <property type="term" value="P:DNA recombination"/>
    <property type="evidence" value="ECO:0007669"/>
    <property type="project" value="UniProtKB-UniRule"/>
</dbReference>
<dbReference type="GO" id="GO:0006281">
    <property type="term" value="P:DNA repair"/>
    <property type="evidence" value="ECO:0007669"/>
    <property type="project" value="UniProtKB-UniRule"/>
</dbReference>
<dbReference type="CDD" id="cd00009">
    <property type="entry name" value="AAA"/>
    <property type="match status" value="1"/>
</dbReference>
<dbReference type="Gene3D" id="1.10.8.60">
    <property type="match status" value="1"/>
</dbReference>
<dbReference type="Gene3D" id="3.40.50.300">
    <property type="entry name" value="P-loop containing nucleotide triphosphate hydrolases"/>
    <property type="match status" value="1"/>
</dbReference>
<dbReference type="Gene3D" id="1.10.10.10">
    <property type="entry name" value="Winged helix-like DNA-binding domain superfamily/Winged helix DNA-binding domain"/>
    <property type="match status" value="1"/>
</dbReference>
<dbReference type="HAMAP" id="MF_00016">
    <property type="entry name" value="DNA_HJ_migration_RuvB"/>
    <property type="match status" value="1"/>
</dbReference>
<dbReference type="InterPro" id="IPR003593">
    <property type="entry name" value="AAA+_ATPase"/>
</dbReference>
<dbReference type="InterPro" id="IPR041445">
    <property type="entry name" value="AAA_lid_4"/>
</dbReference>
<dbReference type="InterPro" id="IPR004605">
    <property type="entry name" value="DNA_helicase_Holl-junc_RuvB"/>
</dbReference>
<dbReference type="InterPro" id="IPR027417">
    <property type="entry name" value="P-loop_NTPase"/>
</dbReference>
<dbReference type="InterPro" id="IPR008824">
    <property type="entry name" value="RuvB-like_N"/>
</dbReference>
<dbReference type="InterPro" id="IPR008823">
    <property type="entry name" value="RuvB_C"/>
</dbReference>
<dbReference type="InterPro" id="IPR036388">
    <property type="entry name" value="WH-like_DNA-bd_sf"/>
</dbReference>
<dbReference type="InterPro" id="IPR036390">
    <property type="entry name" value="WH_DNA-bd_sf"/>
</dbReference>
<dbReference type="NCBIfam" id="NF000868">
    <property type="entry name" value="PRK00080.1"/>
    <property type="match status" value="1"/>
</dbReference>
<dbReference type="NCBIfam" id="TIGR00635">
    <property type="entry name" value="ruvB"/>
    <property type="match status" value="1"/>
</dbReference>
<dbReference type="PANTHER" id="PTHR42848">
    <property type="match status" value="1"/>
</dbReference>
<dbReference type="PANTHER" id="PTHR42848:SF1">
    <property type="entry name" value="HOLLIDAY JUNCTION BRANCH MIGRATION COMPLEX SUBUNIT RUVB"/>
    <property type="match status" value="1"/>
</dbReference>
<dbReference type="Pfam" id="PF17864">
    <property type="entry name" value="AAA_lid_4"/>
    <property type="match status" value="1"/>
</dbReference>
<dbReference type="Pfam" id="PF05491">
    <property type="entry name" value="RuvB_C"/>
    <property type="match status" value="1"/>
</dbReference>
<dbReference type="Pfam" id="PF05496">
    <property type="entry name" value="RuvB_N"/>
    <property type="match status" value="1"/>
</dbReference>
<dbReference type="SMART" id="SM00382">
    <property type="entry name" value="AAA"/>
    <property type="match status" value="1"/>
</dbReference>
<dbReference type="SUPFAM" id="SSF52540">
    <property type="entry name" value="P-loop containing nucleoside triphosphate hydrolases"/>
    <property type="match status" value="1"/>
</dbReference>
<dbReference type="SUPFAM" id="SSF46785">
    <property type="entry name" value="Winged helix' DNA-binding domain"/>
    <property type="match status" value="1"/>
</dbReference>
<feature type="chain" id="PRO_1000001465" description="Holliday junction branch migration complex subunit RuvB">
    <location>
        <begin position="1"/>
        <end position="342"/>
    </location>
</feature>
<feature type="region of interest" description="Large ATPase domain (RuvB-L)" evidence="1">
    <location>
        <begin position="1"/>
        <end position="179"/>
    </location>
</feature>
<feature type="region of interest" description="Small ATPAse domain (RuvB-S)" evidence="1">
    <location>
        <begin position="180"/>
        <end position="250"/>
    </location>
</feature>
<feature type="region of interest" description="Head domain (RuvB-H)" evidence="1">
    <location>
        <begin position="253"/>
        <end position="342"/>
    </location>
</feature>
<feature type="binding site" evidence="1">
    <location>
        <position position="18"/>
    </location>
    <ligand>
        <name>ATP</name>
        <dbReference type="ChEBI" id="CHEBI:30616"/>
    </ligand>
</feature>
<feature type="binding site" evidence="1">
    <location>
        <position position="19"/>
    </location>
    <ligand>
        <name>ATP</name>
        <dbReference type="ChEBI" id="CHEBI:30616"/>
    </ligand>
</feature>
<feature type="binding site" evidence="1">
    <location>
        <position position="60"/>
    </location>
    <ligand>
        <name>ATP</name>
        <dbReference type="ChEBI" id="CHEBI:30616"/>
    </ligand>
</feature>
<feature type="binding site" evidence="1">
    <location>
        <position position="63"/>
    </location>
    <ligand>
        <name>ATP</name>
        <dbReference type="ChEBI" id="CHEBI:30616"/>
    </ligand>
</feature>
<feature type="binding site" evidence="1">
    <location>
        <position position="64"/>
    </location>
    <ligand>
        <name>ATP</name>
        <dbReference type="ChEBI" id="CHEBI:30616"/>
    </ligand>
</feature>
<feature type="binding site" evidence="1">
    <location>
        <position position="64"/>
    </location>
    <ligand>
        <name>Mg(2+)</name>
        <dbReference type="ChEBI" id="CHEBI:18420"/>
    </ligand>
</feature>
<feature type="binding site" evidence="1">
    <location>
        <position position="65"/>
    </location>
    <ligand>
        <name>ATP</name>
        <dbReference type="ChEBI" id="CHEBI:30616"/>
    </ligand>
</feature>
<feature type="binding site" evidence="1">
    <location>
        <begin position="126"/>
        <end position="128"/>
    </location>
    <ligand>
        <name>ATP</name>
        <dbReference type="ChEBI" id="CHEBI:30616"/>
    </ligand>
</feature>
<feature type="binding site" evidence="1">
    <location>
        <position position="169"/>
    </location>
    <ligand>
        <name>ATP</name>
        <dbReference type="ChEBI" id="CHEBI:30616"/>
    </ligand>
</feature>
<feature type="binding site" evidence="1">
    <location>
        <position position="179"/>
    </location>
    <ligand>
        <name>ATP</name>
        <dbReference type="ChEBI" id="CHEBI:30616"/>
    </ligand>
</feature>
<feature type="binding site" evidence="1">
    <location>
        <position position="216"/>
    </location>
    <ligand>
        <name>ATP</name>
        <dbReference type="ChEBI" id="CHEBI:30616"/>
    </ligand>
</feature>
<feature type="binding site" evidence="1">
    <location>
        <position position="289"/>
    </location>
    <ligand>
        <name>DNA</name>
        <dbReference type="ChEBI" id="CHEBI:16991"/>
    </ligand>
</feature>
<feature type="binding site" evidence="1">
    <location>
        <position position="308"/>
    </location>
    <ligand>
        <name>DNA</name>
        <dbReference type="ChEBI" id="CHEBI:16991"/>
    </ligand>
</feature>
<feature type="binding site" evidence="1">
    <location>
        <position position="313"/>
    </location>
    <ligand>
        <name>DNA</name>
        <dbReference type="ChEBI" id="CHEBI:16991"/>
    </ligand>
</feature>
<keyword id="KW-0067">ATP-binding</keyword>
<keyword id="KW-0963">Cytoplasm</keyword>
<keyword id="KW-0227">DNA damage</keyword>
<keyword id="KW-0233">DNA recombination</keyword>
<keyword id="KW-0234">DNA repair</keyword>
<keyword id="KW-0238">DNA-binding</keyword>
<keyword id="KW-0378">Hydrolase</keyword>
<keyword id="KW-0547">Nucleotide-binding</keyword>
<sequence>MTNILSPEKSENDQELPIRPSYLQEFVGQQQIKENLSVFIKAAKSRNEHLDHTLFYGPPGLGKTTLAKIISNEIGGNFKSTSGPAILKVADLAAILTNLEKNDVLFIDEIHRLNTAVEEVLYPAMEDFELDIIIGEGSAARSVKITLPKFTLIGATTRLGLLSNPLRDRFGIPMRLNFYNTEELKKVLNRASKLLDIDLTDSGSEEIAKRSRGTPRIALRLLRRIRDFAAVEGKSRVDKEVSDFGLNRLEVDRIGLDSNDYRYLKFIADNYNGGPVGIETIAAALSEQRDALEETIEPYLIQIGLLQRTPRGRVITIAAFEHLKMSVPNQSHHQFNIFNENE</sequence>
<evidence type="ECO:0000255" key="1">
    <source>
        <dbReference type="HAMAP-Rule" id="MF_00016"/>
    </source>
</evidence>
<protein>
    <recommendedName>
        <fullName evidence="1">Holliday junction branch migration complex subunit RuvB</fullName>
        <ecNumber evidence="1">3.6.4.-</ecNumber>
    </recommendedName>
</protein>
<proteinExistence type="inferred from homology"/>
<gene>
    <name evidence="1" type="primary">ruvB</name>
    <name type="ordered locus">A1G_03025</name>
</gene>